<reference key="1">
    <citation type="journal article" date="2006" name="J. Bacteriol.">
        <title>Complete genome sequence of the dehalorespiring bacterium Desulfitobacterium hafniense Y51 and comparison with Dehalococcoides ethenogenes 195.</title>
        <authorList>
            <person name="Nonaka H."/>
            <person name="Keresztes G."/>
            <person name="Shinoda Y."/>
            <person name="Ikenaga Y."/>
            <person name="Abe M."/>
            <person name="Naito K."/>
            <person name="Inatomi K."/>
            <person name="Furukawa K."/>
            <person name="Inui M."/>
            <person name="Yukawa H."/>
        </authorList>
    </citation>
    <scope>NUCLEOTIDE SEQUENCE [LARGE SCALE GENOMIC DNA]</scope>
    <source>
        <strain>Y51</strain>
    </source>
</reference>
<proteinExistence type="inferred from homology"/>
<feature type="chain" id="PRO_0000255831" description="Pyridoxal 5'-phosphate synthase subunit PdxT">
    <location>
        <begin position="1"/>
        <end position="199"/>
    </location>
</feature>
<feature type="active site" description="Nucleophile" evidence="1">
    <location>
        <position position="79"/>
    </location>
</feature>
<feature type="active site" description="Charge relay system" evidence="1">
    <location>
        <position position="169"/>
    </location>
</feature>
<feature type="active site" description="Charge relay system" evidence="1">
    <location>
        <position position="171"/>
    </location>
</feature>
<feature type="binding site" evidence="1">
    <location>
        <begin position="47"/>
        <end position="49"/>
    </location>
    <ligand>
        <name>L-glutamine</name>
        <dbReference type="ChEBI" id="CHEBI:58359"/>
    </ligand>
</feature>
<feature type="binding site" evidence="1">
    <location>
        <position position="106"/>
    </location>
    <ligand>
        <name>L-glutamine</name>
        <dbReference type="ChEBI" id="CHEBI:58359"/>
    </ligand>
</feature>
<feature type="binding site" evidence="1">
    <location>
        <begin position="133"/>
        <end position="134"/>
    </location>
    <ligand>
        <name>L-glutamine</name>
        <dbReference type="ChEBI" id="CHEBI:58359"/>
    </ligand>
</feature>
<sequence>MRVGVLAVQGAFIEHEKILQNLGVECLELRNGKDARQDVEGLILPGGESTTQGKLLRELDMFEPLREKIVAGLPVLATCAGLILLAEELANDSARYFATLPVRVKRNAYGRQLGSFYTEEQFGDLGKVPMTFIRAPYIESVGEGVEILAKVKGDIVGVRYKNQIGLSFHPELNGDRRIHQMFLDSISDGKSAPCKQKAV</sequence>
<accession>Q24PK8</accession>
<name>PDXT_DESHY</name>
<keyword id="KW-0315">Glutamine amidotransferase</keyword>
<keyword id="KW-0378">Hydrolase</keyword>
<keyword id="KW-0456">Lyase</keyword>
<keyword id="KW-0663">Pyridoxal phosphate</keyword>
<keyword id="KW-1185">Reference proteome</keyword>
<gene>
    <name evidence="1" type="primary">pdxT</name>
    <name type="ordered locus">DSY4245</name>
</gene>
<comment type="function">
    <text evidence="1">Catalyzes the hydrolysis of glutamine to glutamate and ammonia as part of the biosynthesis of pyridoxal 5'-phosphate. The resulting ammonia molecule is channeled to the active site of PdxS.</text>
</comment>
<comment type="catalytic activity">
    <reaction evidence="1">
        <text>aldehydo-D-ribose 5-phosphate + D-glyceraldehyde 3-phosphate + L-glutamine = pyridoxal 5'-phosphate + L-glutamate + phosphate + 3 H2O + H(+)</text>
        <dbReference type="Rhea" id="RHEA:31507"/>
        <dbReference type="ChEBI" id="CHEBI:15377"/>
        <dbReference type="ChEBI" id="CHEBI:15378"/>
        <dbReference type="ChEBI" id="CHEBI:29985"/>
        <dbReference type="ChEBI" id="CHEBI:43474"/>
        <dbReference type="ChEBI" id="CHEBI:58273"/>
        <dbReference type="ChEBI" id="CHEBI:58359"/>
        <dbReference type="ChEBI" id="CHEBI:59776"/>
        <dbReference type="ChEBI" id="CHEBI:597326"/>
        <dbReference type="EC" id="4.3.3.6"/>
    </reaction>
</comment>
<comment type="catalytic activity">
    <reaction evidence="1">
        <text>L-glutamine + H2O = L-glutamate + NH4(+)</text>
        <dbReference type="Rhea" id="RHEA:15889"/>
        <dbReference type="ChEBI" id="CHEBI:15377"/>
        <dbReference type="ChEBI" id="CHEBI:28938"/>
        <dbReference type="ChEBI" id="CHEBI:29985"/>
        <dbReference type="ChEBI" id="CHEBI:58359"/>
        <dbReference type="EC" id="3.5.1.2"/>
    </reaction>
</comment>
<comment type="pathway">
    <text evidence="1">Cofactor biosynthesis; pyridoxal 5'-phosphate biosynthesis.</text>
</comment>
<comment type="subunit">
    <text evidence="1">In the presence of PdxS, forms a dodecamer of heterodimers. Only shows activity in the heterodimer.</text>
</comment>
<comment type="similarity">
    <text evidence="1">Belongs to the glutaminase PdxT/SNO family.</text>
</comment>
<dbReference type="EC" id="4.3.3.6" evidence="1"/>
<dbReference type="EC" id="3.5.1.2" evidence="1"/>
<dbReference type="EMBL" id="AP008230">
    <property type="protein sequence ID" value="BAE86034.1"/>
    <property type="molecule type" value="Genomic_DNA"/>
</dbReference>
<dbReference type="RefSeq" id="WP_011461704.1">
    <property type="nucleotide sequence ID" value="NC_007907.1"/>
</dbReference>
<dbReference type="SMR" id="Q24PK8"/>
<dbReference type="STRING" id="138119.DSY4245"/>
<dbReference type="MEROPS" id="C26.A32"/>
<dbReference type="KEGG" id="dsy:DSY4245"/>
<dbReference type="eggNOG" id="COG0311">
    <property type="taxonomic scope" value="Bacteria"/>
</dbReference>
<dbReference type="HOGENOM" id="CLU_069674_2_0_9"/>
<dbReference type="UniPathway" id="UPA00245"/>
<dbReference type="Proteomes" id="UP000001946">
    <property type="component" value="Chromosome"/>
</dbReference>
<dbReference type="GO" id="GO:0005829">
    <property type="term" value="C:cytosol"/>
    <property type="evidence" value="ECO:0007669"/>
    <property type="project" value="TreeGrafter"/>
</dbReference>
<dbReference type="GO" id="GO:1903600">
    <property type="term" value="C:glutaminase complex"/>
    <property type="evidence" value="ECO:0007669"/>
    <property type="project" value="TreeGrafter"/>
</dbReference>
<dbReference type="GO" id="GO:0004359">
    <property type="term" value="F:glutaminase activity"/>
    <property type="evidence" value="ECO:0007669"/>
    <property type="project" value="UniProtKB-UniRule"/>
</dbReference>
<dbReference type="GO" id="GO:0036381">
    <property type="term" value="F:pyridoxal 5'-phosphate synthase (glutamine hydrolysing) activity"/>
    <property type="evidence" value="ECO:0007669"/>
    <property type="project" value="UniProtKB-UniRule"/>
</dbReference>
<dbReference type="GO" id="GO:0006543">
    <property type="term" value="P:glutamine catabolic process"/>
    <property type="evidence" value="ECO:0007669"/>
    <property type="project" value="UniProtKB-UniRule"/>
</dbReference>
<dbReference type="GO" id="GO:0042823">
    <property type="term" value="P:pyridoxal phosphate biosynthetic process"/>
    <property type="evidence" value="ECO:0007669"/>
    <property type="project" value="UniProtKB-UniRule"/>
</dbReference>
<dbReference type="GO" id="GO:0008614">
    <property type="term" value="P:pyridoxine metabolic process"/>
    <property type="evidence" value="ECO:0007669"/>
    <property type="project" value="TreeGrafter"/>
</dbReference>
<dbReference type="CDD" id="cd01749">
    <property type="entry name" value="GATase1_PB"/>
    <property type="match status" value="1"/>
</dbReference>
<dbReference type="FunFam" id="3.40.50.880:FF:000010">
    <property type="entry name" value="uncharacterized protein LOC100176842 isoform X2"/>
    <property type="match status" value="1"/>
</dbReference>
<dbReference type="Gene3D" id="3.40.50.880">
    <property type="match status" value="1"/>
</dbReference>
<dbReference type="HAMAP" id="MF_01615">
    <property type="entry name" value="PdxT"/>
    <property type="match status" value="1"/>
</dbReference>
<dbReference type="InterPro" id="IPR029062">
    <property type="entry name" value="Class_I_gatase-like"/>
</dbReference>
<dbReference type="InterPro" id="IPR002161">
    <property type="entry name" value="PdxT/SNO"/>
</dbReference>
<dbReference type="InterPro" id="IPR021196">
    <property type="entry name" value="PdxT/SNO_CS"/>
</dbReference>
<dbReference type="NCBIfam" id="TIGR03800">
    <property type="entry name" value="PLP_synth_Pdx2"/>
    <property type="match status" value="1"/>
</dbReference>
<dbReference type="PANTHER" id="PTHR31559">
    <property type="entry name" value="PYRIDOXAL 5'-PHOSPHATE SYNTHASE SUBUNIT SNO"/>
    <property type="match status" value="1"/>
</dbReference>
<dbReference type="PANTHER" id="PTHR31559:SF0">
    <property type="entry name" value="PYRIDOXAL 5'-PHOSPHATE SYNTHASE SUBUNIT SNO1-RELATED"/>
    <property type="match status" value="1"/>
</dbReference>
<dbReference type="Pfam" id="PF01174">
    <property type="entry name" value="SNO"/>
    <property type="match status" value="1"/>
</dbReference>
<dbReference type="PIRSF" id="PIRSF005639">
    <property type="entry name" value="Glut_amidoT_SNO"/>
    <property type="match status" value="1"/>
</dbReference>
<dbReference type="SUPFAM" id="SSF52317">
    <property type="entry name" value="Class I glutamine amidotransferase-like"/>
    <property type="match status" value="1"/>
</dbReference>
<dbReference type="PROSITE" id="PS01236">
    <property type="entry name" value="PDXT_SNO_1"/>
    <property type="match status" value="1"/>
</dbReference>
<dbReference type="PROSITE" id="PS51130">
    <property type="entry name" value="PDXT_SNO_2"/>
    <property type="match status" value="1"/>
</dbReference>
<protein>
    <recommendedName>
        <fullName evidence="1">Pyridoxal 5'-phosphate synthase subunit PdxT</fullName>
        <ecNumber evidence="1">4.3.3.6</ecNumber>
    </recommendedName>
    <alternativeName>
        <fullName evidence="1">Pdx2</fullName>
    </alternativeName>
    <alternativeName>
        <fullName evidence="1">Pyridoxal 5'-phosphate synthase glutaminase subunit</fullName>
        <ecNumber evidence="1">3.5.1.2</ecNumber>
    </alternativeName>
</protein>
<evidence type="ECO:0000255" key="1">
    <source>
        <dbReference type="HAMAP-Rule" id="MF_01615"/>
    </source>
</evidence>
<organism>
    <name type="scientific">Desulfitobacterium hafniense (strain Y51)</name>
    <dbReference type="NCBI Taxonomy" id="138119"/>
    <lineage>
        <taxon>Bacteria</taxon>
        <taxon>Bacillati</taxon>
        <taxon>Bacillota</taxon>
        <taxon>Clostridia</taxon>
        <taxon>Eubacteriales</taxon>
        <taxon>Desulfitobacteriaceae</taxon>
        <taxon>Desulfitobacterium</taxon>
    </lineage>
</organism>